<proteinExistence type="evidence at protein level"/>
<name>TXM46_CONAO</name>
<comment type="subcellular location">
    <subcellularLocation>
        <location evidence="1">Secreted</location>
    </subcellularLocation>
</comment>
<comment type="tissue specificity">
    <text evidence="4">Expressed by the venom duct.</text>
</comment>
<comment type="domain">
    <text evidence="3">The cysteine framework is III (CC-C-C-CC). Classified in the M-2 branch, since 2 residues stand between the fourth and the fifth cysteine residues.</text>
</comment>
<comment type="similarity">
    <text evidence="3">Belongs to the conotoxin M superfamily.</text>
</comment>
<evidence type="ECO:0000269" key="1">
    <source>
    </source>
</evidence>
<evidence type="ECO:0000303" key="2">
    <source>
    </source>
</evidence>
<evidence type="ECO:0000305" key="3"/>
<evidence type="ECO:0000305" key="4">
    <source>
    </source>
</evidence>
<evidence type="ECO:0007744" key="5">
    <source>
        <dbReference type="PDB" id="2M61"/>
    </source>
</evidence>
<evidence type="ECO:0007829" key="6">
    <source>
        <dbReference type="PDB" id="2M61"/>
    </source>
</evidence>
<feature type="peptide" id="PRO_0000402420" description="Conotoxin Ar1446" evidence="1">
    <location>
        <begin position="1"/>
        <end position="14"/>
    </location>
</feature>
<feature type="modified residue" description="4-hydroxyproline; partial" evidence="1">
    <location>
        <position position="12"/>
    </location>
</feature>
<feature type="modified residue" description="Cysteine amide" evidence="1">
    <location>
        <position position="14"/>
    </location>
</feature>
<feature type="disulfide bond" evidence="1 5">
    <location>
        <begin position="1"/>
        <end position="14"/>
    </location>
</feature>
<feature type="disulfide bond" evidence="1 5">
    <location>
        <begin position="2"/>
        <end position="10"/>
    </location>
</feature>
<feature type="disulfide bond" evidence="1 5">
    <location>
        <begin position="6"/>
        <end position="13"/>
    </location>
</feature>
<feature type="helix" evidence="6">
    <location>
        <begin position="5"/>
        <end position="7"/>
    </location>
</feature>
<dbReference type="PDB" id="2M61">
    <property type="method" value="NMR"/>
    <property type="chains" value="A=1-14"/>
</dbReference>
<dbReference type="PDBsum" id="2M61"/>
<dbReference type="BMRB" id="P0CI24"/>
<dbReference type="SMR" id="P0CI24"/>
<dbReference type="EvolutionaryTrace" id="P0CI24"/>
<dbReference type="GO" id="GO:0005576">
    <property type="term" value="C:extracellular region"/>
    <property type="evidence" value="ECO:0007669"/>
    <property type="project" value="UniProtKB-SubCell"/>
</dbReference>
<dbReference type="GO" id="GO:0090729">
    <property type="term" value="F:toxin activity"/>
    <property type="evidence" value="ECO:0007669"/>
    <property type="project" value="UniProtKB-KW"/>
</dbReference>
<protein>
    <recommendedName>
        <fullName evidence="2">Conotoxin Ar1446</fullName>
    </recommendedName>
    <alternativeName>
        <fullName evidence="2">Conotoxin Ar1430</fullName>
    </alternativeName>
</protein>
<keyword id="KW-0002">3D-structure</keyword>
<keyword id="KW-0027">Amidation</keyword>
<keyword id="KW-0903">Direct protein sequencing</keyword>
<keyword id="KW-1015">Disulfide bond</keyword>
<keyword id="KW-0379">Hydroxylation</keyword>
<keyword id="KW-0964">Secreted</keyword>
<keyword id="KW-0800">Toxin</keyword>
<accession>P0CI24</accession>
<sequence length="14" mass="1439">CCRLACGLGCHPCC</sequence>
<organism>
    <name type="scientific">Conus araneosus</name>
    <name type="common">Cobweb cone</name>
    <dbReference type="NCBI Taxonomy" id="101286"/>
    <lineage>
        <taxon>Eukaryota</taxon>
        <taxon>Metazoa</taxon>
        <taxon>Spiralia</taxon>
        <taxon>Lophotrochozoa</taxon>
        <taxon>Mollusca</taxon>
        <taxon>Gastropoda</taxon>
        <taxon>Caenogastropoda</taxon>
        <taxon>Neogastropoda</taxon>
        <taxon>Conoidea</taxon>
        <taxon>Conidae</taxon>
        <taxon>Conus</taxon>
    </lineage>
</organism>
<reference key="1">
    <citation type="journal article" date="2010" name="Anal. Chem.">
        <title>Disulfide bond assignments by mass spectrometry of native natural peptides: cysteine pairing in disulfide bonded conotoxins.</title>
        <authorList>
            <person name="Gupta K."/>
            <person name="Kumar M."/>
            <person name="Balaram P."/>
        </authorList>
    </citation>
    <scope>PROTEIN SEQUENCE</scope>
    <scope>IDENTIFICATION BY MASS SPECTROMETRY</scope>
    <scope>DISULFIDE BONDS</scope>
    <scope>HYDROXYLATION AT PRO-12</scope>
    <scope>AMIDATION AT CYS-14</scope>
    <scope>SUBCELLULAR LOCATION</scope>
    <source>
        <tissue>Venom</tissue>
    </source>
</reference>